<name>NANT_SALEP</name>
<feature type="chain" id="PRO_1000214059" description="Sialic acid transporter NanT">
    <location>
        <begin position="1"/>
        <end position="496"/>
    </location>
</feature>
<feature type="transmembrane region" description="Helical" evidence="1">
    <location>
        <begin position="22"/>
        <end position="42"/>
    </location>
</feature>
<feature type="transmembrane region" description="Helical" evidence="1">
    <location>
        <begin position="58"/>
        <end position="78"/>
    </location>
</feature>
<feature type="transmembrane region" description="Helical" evidence="1">
    <location>
        <begin position="86"/>
        <end position="106"/>
    </location>
</feature>
<feature type="transmembrane region" description="Helical" evidence="1">
    <location>
        <begin position="116"/>
        <end position="136"/>
    </location>
</feature>
<feature type="transmembrane region" description="Helical" evidence="1">
    <location>
        <begin position="148"/>
        <end position="168"/>
    </location>
</feature>
<feature type="transmembrane region" description="Helical" evidence="1">
    <location>
        <begin position="170"/>
        <end position="190"/>
    </location>
</feature>
<feature type="transmembrane region" description="Helical" evidence="1">
    <location>
        <begin position="224"/>
        <end position="244"/>
    </location>
</feature>
<feature type="transmembrane region" description="Helical" evidence="1">
    <location>
        <begin position="247"/>
        <end position="267"/>
    </location>
</feature>
<feature type="transmembrane region" description="Helical" evidence="1">
    <location>
        <begin position="278"/>
        <end position="298"/>
    </location>
</feature>
<feature type="transmembrane region" description="Helical" evidence="1">
    <location>
        <begin position="313"/>
        <end position="333"/>
    </location>
</feature>
<feature type="transmembrane region" description="Helical" evidence="1">
    <location>
        <begin position="353"/>
        <end position="373"/>
    </location>
</feature>
<feature type="transmembrane region" description="Helical" evidence="1">
    <location>
        <begin position="374"/>
        <end position="394"/>
    </location>
</feature>
<feature type="transmembrane region" description="Helical" evidence="1">
    <location>
        <begin position="406"/>
        <end position="426"/>
    </location>
</feature>
<feature type="transmembrane region" description="Helical" evidence="1">
    <location>
        <begin position="431"/>
        <end position="451"/>
    </location>
</feature>
<proteinExistence type="inferred from homology"/>
<dbReference type="EMBL" id="AM933172">
    <property type="protein sequence ID" value="CAR34747.1"/>
    <property type="molecule type" value="Genomic_DNA"/>
</dbReference>
<dbReference type="RefSeq" id="WP_000108071.1">
    <property type="nucleotide sequence ID" value="NC_011294.1"/>
</dbReference>
<dbReference type="SMR" id="B5R0L1"/>
<dbReference type="KEGG" id="set:SEN3171"/>
<dbReference type="HOGENOM" id="CLU_001265_46_8_6"/>
<dbReference type="Proteomes" id="UP000000613">
    <property type="component" value="Chromosome"/>
</dbReference>
<dbReference type="GO" id="GO:0005886">
    <property type="term" value="C:plasma membrane"/>
    <property type="evidence" value="ECO:0007669"/>
    <property type="project" value="UniProtKB-SubCell"/>
</dbReference>
<dbReference type="GO" id="GO:0046943">
    <property type="term" value="F:carboxylic acid transmembrane transporter activity"/>
    <property type="evidence" value="ECO:0007669"/>
    <property type="project" value="TreeGrafter"/>
</dbReference>
<dbReference type="GO" id="GO:0015538">
    <property type="term" value="F:sialic acid:proton symporter activity"/>
    <property type="evidence" value="ECO:0007669"/>
    <property type="project" value="UniProtKB-UniRule"/>
</dbReference>
<dbReference type="CDD" id="cd17316">
    <property type="entry name" value="MFS_SV2_like"/>
    <property type="match status" value="1"/>
</dbReference>
<dbReference type="FunFam" id="1.20.1250.20:FF:000027">
    <property type="entry name" value="Sialic acid transporter NanT"/>
    <property type="match status" value="1"/>
</dbReference>
<dbReference type="FunFam" id="1.20.1250.20:FF:000038">
    <property type="entry name" value="Sialic acid transporter NanT"/>
    <property type="match status" value="1"/>
</dbReference>
<dbReference type="Gene3D" id="1.20.1250.20">
    <property type="entry name" value="MFS general substrate transporter like domains"/>
    <property type="match status" value="2"/>
</dbReference>
<dbReference type="HAMAP" id="MF_01238">
    <property type="entry name" value="MFS_NanT"/>
    <property type="match status" value="1"/>
</dbReference>
<dbReference type="InterPro" id="IPR011701">
    <property type="entry name" value="MFS"/>
</dbReference>
<dbReference type="InterPro" id="IPR020846">
    <property type="entry name" value="MFS_dom"/>
</dbReference>
<dbReference type="InterPro" id="IPR036259">
    <property type="entry name" value="MFS_trans_sf"/>
</dbReference>
<dbReference type="InterPro" id="IPR004742">
    <property type="entry name" value="SA_transporter"/>
</dbReference>
<dbReference type="NCBIfam" id="TIGR00891">
    <property type="entry name" value="2A0112"/>
    <property type="match status" value="1"/>
</dbReference>
<dbReference type="NCBIfam" id="NF003024">
    <property type="entry name" value="PRK03893.1"/>
    <property type="match status" value="1"/>
</dbReference>
<dbReference type="PANTHER" id="PTHR23508">
    <property type="entry name" value="CARBOXYLIC ACID TRANSPORTER PROTEIN HOMOLOG"/>
    <property type="match status" value="1"/>
</dbReference>
<dbReference type="PANTHER" id="PTHR23508:SF3">
    <property type="entry name" value="SIALIC ACID TRANSPORTER NANT"/>
    <property type="match status" value="1"/>
</dbReference>
<dbReference type="Pfam" id="PF07690">
    <property type="entry name" value="MFS_1"/>
    <property type="match status" value="1"/>
</dbReference>
<dbReference type="SUPFAM" id="SSF103473">
    <property type="entry name" value="MFS general substrate transporter"/>
    <property type="match status" value="1"/>
</dbReference>
<dbReference type="PROSITE" id="PS50850">
    <property type="entry name" value="MFS"/>
    <property type="match status" value="1"/>
</dbReference>
<reference key="1">
    <citation type="journal article" date="2008" name="Genome Res.">
        <title>Comparative genome analysis of Salmonella enteritidis PT4 and Salmonella gallinarum 287/91 provides insights into evolutionary and host adaptation pathways.</title>
        <authorList>
            <person name="Thomson N.R."/>
            <person name="Clayton D.J."/>
            <person name="Windhorst D."/>
            <person name="Vernikos G."/>
            <person name="Davidson S."/>
            <person name="Churcher C."/>
            <person name="Quail M.A."/>
            <person name="Stevens M."/>
            <person name="Jones M.A."/>
            <person name="Watson M."/>
            <person name="Barron A."/>
            <person name="Layton A."/>
            <person name="Pickard D."/>
            <person name="Kingsley R.A."/>
            <person name="Bignell A."/>
            <person name="Clark L."/>
            <person name="Harris B."/>
            <person name="Ormond D."/>
            <person name="Abdellah Z."/>
            <person name="Brooks K."/>
            <person name="Cherevach I."/>
            <person name="Chillingworth T."/>
            <person name="Woodward J."/>
            <person name="Norberczak H."/>
            <person name="Lord A."/>
            <person name="Arrowsmith C."/>
            <person name="Jagels K."/>
            <person name="Moule S."/>
            <person name="Mungall K."/>
            <person name="Saunders M."/>
            <person name="Whitehead S."/>
            <person name="Chabalgoity J.A."/>
            <person name="Maskell D."/>
            <person name="Humphreys T."/>
            <person name="Roberts M."/>
            <person name="Barrow P.A."/>
            <person name="Dougan G."/>
            <person name="Parkhill J."/>
        </authorList>
    </citation>
    <scope>NUCLEOTIDE SEQUENCE [LARGE SCALE GENOMIC DNA]</scope>
    <source>
        <strain>P125109</strain>
    </source>
</reference>
<accession>B5R0L1</accession>
<sequence>MSTSTQNIPWYRHLNRAQWRAFSAAWLGYLLDGFDFVLIALVLTEVQSEFGLTTVQAASLISAAFISRWFGGLLLGAMGDRYGRRLAMVSSIILFSVGTLACGFAPGYTTMFIARLVIGMGMAGEYGSSATYVIESWPKHLRNKASGFLISGFSVGAVVAAQVYSLVVPVWGWRALFFIGILPIIFALWLRKNIPEAEDWKEKHAGKAPVRTMVDILYRGEHRIINILMTFAAAAALWFCFAGNLQNAAIVAGLGLLCAVIFISFMVQSSGKRWPTGVMLMLVVLFAFLYSWPIQALLPTYLKTELAYDPHTVANVLFFSGFGAAVGCCVGGFLGDWLGTRKAYVCSLLASQILIIPVFAIGGTNVWVLGLLLFFQQMLGQGIAGILPKLIGGYFDTDQRAAGLGFTYNVGALGGALAPILGALIAQRLDLGTALASLSFSLTFVVILLIGLDMPSRVQRWLRPEALRTHDAIDDKPFSGAVPLGSGKGAFVKTKS</sequence>
<organism>
    <name type="scientific">Salmonella enteritidis PT4 (strain P125109)</name>
    <dbReference type="NCBI Taxonomy" id="550537"/>
    <lineage>
        <taxon>Bacteria</taxon>
        <taxon>Pseudomonadati</taxon>
        <taxon>Pseudomonadota</taxon>
        <taxon>Gammaproteobacteria</taxon>
        <taxon>Enterobacterales</taxon>
        <taxon>Enterobacteriaceae</taxon>
        <taxon>Salmonella</taxon>
    </lineage>
</organism>
<gene>
    <name evidence="1" type="primary">nanT</name>
    <name type="ordered locus">SEN3171</name>
</gene>
<keyword id="KW-0997">Cell inner membrane</keyword>
<keyword id="KW-1003">Cell membrane</keyword>
<keyword id="KW-0472">Membrane</keyword>
<keyword id="KW-0762">Sugar transport</keyword>
<keyword id="KW-0812">Transmembrane</keyword>
<keyword id="KW-1133">Transmembrane helix</keyword>
<keyword id="KW-0813">Transport</keyword>
<evidence type="ECO:0000255" key="1">
    <source>
        <dbReference type="HAMAP-Rule" id="MF_01238"/>
    </source>
</evidence>
<comment type="function">
    <text evidence="1">Catalyzes the proton-dependent transport of sialic acid.</text>
</comment>
<comment type="catalytic activity">
    <reaction evidence="1">
        <text>N-acetylneuraminate(in) + H(+)(in) = N-acetylneuraminate(out) + H(+)(out)</text>
        <dbReference type="Rhea" id="RHEA:28987"/>
        <dbReference type="ChEBI" id="CHEBI:15378"/>
        <dbReference type="ChEBI" id="CHEBI:35418"/>
    </reaction>
</comment>
<comment type="subcellular location">
    <subcellularLocation>
        <location evidence="1">Cell inner membrane</location>
        <topology evidence="1">Multi-pass membrane protein</topology>
    </subcellularLocation>
</comment>
<comment type="similarity">
    <text evidence="1">Belongs to the major facilitator superfamily. Sialate:H(+) symporter (SHS) (TC 2.A.1.12) family.</text>
</comment>
<protein>
    <recommendedName>
        <fullName evidence="1">Sialic acid transporter NanT</fullName>
    </recommendedName>
    <alternativeName>
        <fullName evidence="1">Sialic acid permease</fullName>
    </alternativeName>
    <alternativeName>
        <fullName evidence="1">Sialic acid/H(+) symporter</fullName>
    </alternativeName>
</protein>